<evidence type="ECO:0000250" key="1">
    <source>
        <dbReference type="UniProtKB" id="A6ZQI5"/>
    </source>
</evidence>
<evidence type="ECO:0000250" key="2">
    <source>
        <dbReference type="UniProtKB" id="P47008"/>
    </source>
</evidence>
<evidence type="ECO:0000255" key="3">
    <source>
        <dbReference type="PROSITE-ProRule" id="PRU00056"/>
    </source>
</evidence>
<evidence type="ECO:0000305" key="4"/>
<gene>
    <name type="primary">SFH5</name>
    <name type="ordered locus">CNBE4320</name>
</gene>
<protein>
    <recommendedName>
        <fullName>Phosphatidylinositol transfer protein SFH5</fullName>
        <shortName>PITP SFH5</shortName>
    </recommendedName>
</protein>
<name>SFH5_CRYNB</name>
<accession>P0CR45</accession>
<accession>Q55RU9</accession>
<accession>Q5KGA3</accession>
<dbReference type="EMBL" id="AAEY01000028">
    <property type="protein sequence ID" value="EAL20512.1"/>
    <property type="molecule type" value="Genomic_DNA"/>
</dbReference>
<dbReference type="RefSeq" id="XP_775159.1">
    <property type="nucleotide sequence ID" value="XM_770066.1"/>
</dbReference>
<dbReference type="SMR" id="P0CR45"/>
<dbReference type="GeneID" id="4936443"/>
<dbReference type="KEGG" id="cnb:CNBE4320"/>
<dbReference type="VEuPathDB" id="FungiDB:CNBE4320"/>
<dbReference type="HOGENOM" id="CLU_045138_0_1_1"/>
<dbReference type="OrthoDB" id="2025at5206"/>
<dbReference type="GO" id="GO:0032541">
    <property type="term" value="C:cortical endoplasmic reticulum"/>
    <property type="evidence" value="ECO:0007669"/>
    <property type="project" value="TreeGrafter"/>
</dbReference>
<dbReference type="GO" id="GO:0005829">
    <property type="term" value="C:cytosol"/>
    <property type="evidence" value="ECO:0007669"/>
    <property type="project" value="TreeGrafter"/>
</dbReference>
<dbReference type="GO" id="GO:0005789">
    <property type="term" value="C:endoplasmic reticulum membrane"/>
    <property type="evidence" value="ECO:0007669"/>
    <property type="project" value="UniProtKB-SubCell"/>
</dbReference>
<dbReference type="GO" id="GO:0005886">
    <property type="term" value="C:plasma membrane"/>
    <property type="evidence" value="ECO:0007669"/>
    <property type="project" value="TreeGrafter"/>
</dbReference>
<dbReference type="GO" id="GO:0046872">
    <property type="term" value="F:metal ion binding"/>
    <property type="evidence" value="ECO:0007669"/>
    <property type="project" value="UniProtKB-KW"/>
</dbReference>
<dbReference type="GO" id="GO:0008526">
    <property type="term" value="F:phosphatidylinositol transfer activity"/>
    <property type="evidence" value="ECO:0007669"/>
    <property type="project" value="InterPro"/>
</dbReference>
<dbReference type="GO" id="GO:0043001">
    <property type="term" value="P:Golgi to plasma membrane protein transport"/>
    <property type="evidence" value="ECO:0007669"/>
    <property type="project" value="TreeGrafter"/>
</dbReference>
<dbReference type="GO" id="GO:0017157">
    <property type="term" value="P:regulation of exocytosis"/>
    <property type="evidence" value="ECO:0007669"/>
    <property type="project" value="TreeGrafter"/>
</dbReference>
<dbReference type="CDD" id="cd00170">
    <property type="entry name" value="SEC14"/>
    <property type="match status" value="1"/>
</dbReference>
<dbReference type="FunFam" id="3.40.525.10:FF:000018">
    <property type="entry name" value="Phosphatidylinositol transfer protein SFH5"/>
    <property type="match status" value="1"/>
</dbReference>
<dbReference type="Gene3D" id="3.40.525.10">
    <property type="entry name" value="CRAL-TRIO lipid binding domain"/>
    <property type="match status" value="1"/>
</dbReference>
<dbReference type="InterPro" id="IPR001251">
    <property type="entry name" value="CRAL-TRIO_dom"/>
</dbReference>
<dbReference type="InterPro" id="IPR036865">
    <property type="entry name" value="CRAL-TRIO_dom_sf"/>
</dbReference>
<dbReference type="InterPro" id="IPR036273">
    <property type="entry name" value="CRAL/TRIO_N_dom_sf"/>
</dbReference>
<dbReference type="InterPro" id="IPR042938">
    <property type="entry name" value="Sfh5"/>
</dbReference>
<dbReference type="PANTHER" id="PTHR47669">
    <property type="entry name" value="PHOSPHATIDYLINOSITOL TRANSFER PROTEIN SFH5"/>
    <property type="match status" value="1"/>
</dbReference>
<dbReference type="PANTHER" id="PTHR47669:SF1">
    <property type="entry name" value="PHOSPHATIDYLINOSITOL TRANSFER PROTEIN SFH5"/>
    <property type="match status" value="1"/>
</dbReference>
<dbReference type="Pfam" id="PF00650">
    <property type="entry name" value="CRAL_TRIO"/>
    <property type="match status" value="1"/>
</dbReference>
<dbReference type="SUPFAM" id="SSF52087">
    <property type="entry name" value="CRAL/TRIO domain"/>
    <property type="match status" value="1"/>
</dbReference>
<dbReference type="SUPFAM" id="SSF46938">
    <property type="entry name" value="CRAL/TRIO N-terminal domain"/>
    <property type="match status" value="1"/>
</dbReference>
<dbReference type="PROSITE" id="PS50191">
    <property type="entry name" value="CRAL_TRIO"/>
    <property type="match status" value="1"/>
</dbReference>
<reference key="1">
    <citation type="journal article" date="2005" name="Science">
        <title>The genome of the basidiomycetous yeast and human pathogen Cryptococcus neoformans.</title>
        <authorList>
            <person name="Loftus B.J."/>
            <person name="Fung E."/>
            <person name="Roncaglia P."/>
            <person name="Rowley D."/>
            <person name="Amedeo P."/>
            <person name="Bruno D."/>
            <person name="Vamathevan J."/>
            <person name="Miranda M."/>
            <person name="Anderson I.J."/>
            <person name="Fraser J.A."/>
            <person name="Allen J.E."/>
            <person name="Bosdet I.E."/>
            <person name="Brent M.R."/>
            <person name="Chiu R."/>
            <person name="Doering T.L."/>
            <person name="Donlin M.J."/>
            <person name="D'Souza C.A."/>
            <person name="Fox D.S."/>
            <person name="Grinberg V."/>
            <person name="Fu J."/>
            <person name="Fukushima M."/>
            <person name="Haas B.J."/>
            <person name="Huang J.C."/>
            <person name="Janbon G."/>
            <person name="Jones S.J.M."/>
            <person name="Koo H.L."/>
            <person name="Krzywinski M.I."/>
            <person name="Kwon-Chung K.J."/>
            <person name="Lengeler K.B."/>
            <person name="Maiti R."/>
            <person name="Marra M.A."/>
            <person name="Marra R.E."/>
            <person name="Mathewson C.A."/>
            <person name="Mitchell T.G."/>
            <person name="Pertea M."/>
            <person name="Riggs F.R."/>
            <person name="Salzberg S.L."/>
            <person name="Schein J.E."/>
            <person name="Shvartsbeyn A."/>
            <person name="Shin H."/>
            <person name="Shumway M."/>
            <person name="Specht C.A."/>
            <person name="Suh B.B."/>
            <person name="Tenney A."/>
            <person name="Utterback T.R."/>
            <person name="Wickes B.L."/>
            <person name="Wortman J.R."/>
            <person name="Wye N.H."/>
            <person name="Kronstad J.W."/>
            <person name="Lodge J.K."/>
            <person name="Heitman J."/>
            <person name="Davis R.W."/>
            <person name="Fraser C.M."/>
            <person name="Hyman R.W."/>
        </authorList>
    </citation>
    <scope>NUCLEOTIDE SEQUENCE [LARGE SCALE GENOMIC DNA]</scope>
    <source>
        <strain>B-3501A</strain>
    </source>
</reference>
<keyword id="KW-0963">Cytoplasm</keyword>
<keyword id="KW-0256">Endoplasmic reticulum</keyword>
<keyword id="KW-0349">Heme</keyword>
<keyword id="KW-0408">Iron</keyword>
<keyword id="KW-0445">Lipid transport</keyword>
<keyword id="KW-0472">Membrane</keyword>
<keyword id="KW-0479">Metal-binding</keyword>
<keyword id="KW-0492">Microsome</keyword>
<keyword id="KW-0813">Transport</keyword>
<organism>
    <name type="scientific">Cryptococcus neoformans var. neoformans serotype D (strain B-3501A)</name>
    <name type="common">Filobasidiella neoformans</name>
    <dbReference type="NCBI Taxonomy" id="283643"/>
    <lineage>
        <taxon>Eukaryota</taxon>
        <taxon>Fungi</taxon>
        <taxon>Dikarya</taxon>
        <taxon>Basidiomycota</taxon>
        <taxon>Agaricomycotina</taxon>
        <taxon>Tremellomycetes</taxon>
        <taxon>Tremellales</taxon>
        <taxon>Cryptococcaceae</taxon>
        <taxon>Cryptococcus</taxon>
        <taxon>Cryptococcus neoformans species complex</taxon>
    </lineage>
</organism>
<feature type="chain" id="PRO_0000410284" description="Phosphatidylinositol transfer protein SFH5">
    <location>
        <begin position="1"/>
        <end position="297"/>
    </location>
</feature>
<feature type="domain" description="CRAL-TRIO" evidence="3">
    <location>
        <begin position="106"/>
        <end position="282"/>
    </location>
</feature>
<feature type="binding site" evidence="1">
    <location>
        <position position="131"/>
    </location>
    <ligand>
        <name>heme</name>
        <dbReference type="ChEBI" id="CHEBI:30413"/>
    </ligand>
</feature>
<feature type="binding site" evidence="1">
    <location>
        <position position="151"/>
    </location>
    <ligand>
        <name>heme</name>
        <dbReference type="ChEBI" id="CHEBI:30413"/>
    </ligand>
</feature>
<feature type="binding site" evidence="1">
    <location>
        <position position="187"/>
    </location>
    <ligand>
        <name>heme</name>
        <dbReference type="ChEBI" id="CHEBI:30413"/>
    </ligand>
</feature>
<feature type="binding site" description="proximal binding residue" evidence="1">
    <location>
        <position position="189"/>
    </location>
    <ligand>
        <name>heme</name>
        <dbReference type="ChEBI" id="CHEBI:30413"/>
    </ligand>
    <ligandPart>
        <name>Fe</name>
        <dbReference type="ChEBI" id="CHEBI:18248"/>
    </ligandPart>
</feature>
<feature type="binding site" evidence="1">
    <location>
        <position position="223"/>
    </location>
    <ligand>
        <name>heme</name>
        <dbReference type="ChEBI" id="CHEBI:30413"/>
    </ligand>
</feature>
<comment type="function">
    <text evidence="2">Non-classical phosphatidylinositol (PtdIns) transfer protein (PITP), which exhibits PtdIns-binding/transfer activity in the absence of detectable PtdCho-binding/transfer activity. Regulates PtdIns(4,5)P2 homeostasis at the plasma membrane. Heme-binding protein that may play a role in organic oxidant-induced stress responses.</text>
</comment>
<comment type="catalytic activity">
    <reaction evidence="2">
        <text>a 1,2-diacyl-sn-glycero-3-phospho-(1D-myo-inositol)(in) = a 1,2-diacyl-sn-glycero-3-phospho-(1D-myo-inositol)(out)</text>
        <dbReference type="Rhea" id="RHEA:38691"/>
        <dbReference type="ChEBI" id="CHEBI:57880"/>
    </reaction>
    <physiologicalReaction direction="left-to-right" evidence="2">
        <dbReference type="Rhea" id="RHEA:38692"/>
    </physiologicalReaction>
</comment>
<comment type="cofactor">
    <cofactor evidence="1">
        <name>heme b</name>
        <dbReference type="ChEBI" id="CHEBI:60344"/>
    </cofactor>
</comment>
<comment type="subcellular location">
    <subcellularLocation>
        <location evidence="2">Cytoplasm</location>
    </subcellularLocation>
    <subcellularLocation>
        <location evidence="2">Endoplasmic reticulum membrane</location>
        <topology evidence="2">Peripheral membrane protein</topology>
    </subcellularLocation>
    <subcellularLocation>
        <location evidence="2">Microsome membrane</location>
        <topology evidence="2">Peripheral membrane protein</topology>
    </subcellularLocation>
</comment>
<comment type="similarity">
    <text evidence="4">Belongs to the SFH5 family.</text>
</comment>
<proteinExistence type="inferred from homology"/>
<sequence length="297" mass="32971">MSAVEAPSASQAIWPELTEDHPLSQLNSRLPTILSEAGHSQIWGVTLTYSTPPTFSTLIILQKFLRSVDNNVDEAATALGKTLKWRKDWGLDAPADKKEKENFGPDFEGLGYVTKIKKNDGGDEIVTWNVYGAVKDLKSTFGDLDRFLRWRVNLMEEAIAHLHLATTSTPIPDFNAGIDPHRMAQVHLYEGVSFLRMDPHVKAASKATIELMAANYPELLSRKFFVGVPLIMSWMFQAVRMFVSAETAKKFVVISYKENLANELGELEGVPKEYGGKGLSLGELQNQLRGEDAVTSS</sequence>